<comment type="function">
    <text evidence="1">This is one of the proteins that bind and probably mediate the attachment of the 5S RNA into the large ribosomal subunit, where it forms part of the central protuberance. In the 70S ribosome it contacts protein S13 of the 30S subunit (bridge B1b), connecting the 2 subunits; this bridge is implicated in subunit movement. Contacts the P site tRNA; the 5S rRNA and some of its associated proteins might help stabilize positioning of ribosome-bound tRNAs.</text>
</comment>
<comment type="subunit">
    <text evidence="1">Part of the 50S ribosomal subunit; part of the 5S rRNA/L5/L18/L25 subcomplex. Contacts the 5S rRNA and the P site tRNA. Forms a bridge to the 30S subunit in the 70S ribosome.</text>
</comment>
<comment type="similarity">
    <text evidence="1">Belongs to the universal ribosomal protein uL5 family.</text>
</comment>
<organism>
    <name type="scientific">Escherichia coli (strain 55989 / EAEC)</name>
    <dbReference type="NCBI Taxonomy" id="585055"/>
    <lineage>
        <taxon>Bacteria</taxon>
        <taxon>Pseudomonadati</taxon>
        <taxon>Pseudomonadota</taxon>
        <taxon>Gammaproteobacteria</taxon>
        <taxon>Enterobacterales</taxon>
        <taxon>Enterobacteriaceae</taxon>
        <taxon>Escherichia</taxon>
    </lineage>
</organism>
<accession>B7L4J7</accession>
<sequence length="179" mass="20302">MAKLHDYYKDEVVKKLMTEFNYNSVMQVPRVEKITLNMGVGEAIADKKLLDNAAADLAAISGQKPLITKARKSVAGFKIRQGYPIGCKVTLRGERMWEFFERLITIAVPRIRDFRGLSAKSFDGRGNYSMGVREQIIFPEIDYDKVDRVRGLDITITTTAKSDEEGRALLAAFDFPFRK</sequence>
<protein>
    <recommendedName>
        <fullName evidence="1">Large ribosomal subunit protein uL5</fullName>
    </recommendedName>
    <alternativeName>
        <fullName evidence="2">50S ribosomal protein L5</fullName>
    </alternativeName>
</protein>
<keyword id="KW-0007">Acetylation</keyword>
<keyword id="KW-1185">Reference proteome</keyword>
<keyword id="KW-0687">Ribonucleoprotein</keyword>
<keyword id="KW-0689">Ribosomal protein</keyword>
<keyword id="KW-0694">RNA-binding</keyword>
<keyword id="KW-0699">rRNA-binding</keyword>
<keyword id="KW-0820">tRNA-binding</keyword>
<reference key="1">
    <citation type="journal article" date="2009" name="PLoS Genet.">
        <title>Organised genome dynamics in the Escherichia coli species results in highly diverse adaptive paths.</title>
        <authorList>
            <person name="Touchon M."/>
            <person name="Hoede C."/>
            <person name="Tenaillon O."/>
            <person name="Barbe V."/>
            <person name="Baeriswyl S."/>
            <person name="Bidet P."/>
            <person name="Bingen E."/>
            <person name="Bonacorsi S."/>
            <person name="Bouchier C."/>
            <person name="Bouvet O."/>
            <person name="Calteau A."/>
            <person name="Chiapello H."/>
            <person name="Clermont O."/>
            <person name="Cruveiller S."/>
            <person name="Danchin A."/>
            <person name="Diard M."/>
            <person name="Dossat C."/>
            <person name="Karoui M.E."/>
            <person name="Frapy E."/>
            <person name="Garry L."/>
            <person name="Ghigo J.M."/>
            <person name="Gilles A.M."/>
            <person name="Johnson J."/>
            <person name="Le Bouguenec C."/>
            <person name="Lescat M."/>
            <person name="Mangenot S."/>
            <person name="Martinez-Jehanne V."/>
            <person name="Matic I."/>
            <person name="Nassif X."/>
            <person name="Oztas S."/>
            <person name="Petit M.A."/>
            <person name="Pichon C."/>
            <person name="Rouy Z."/>
            <person name="Ruf C.S."/>
            <person name="Schneider D."/>
            <person name="Tourret J."/>
            <person name="Vacherie B."/>
            <person name="Vallenet D."/>
            <person name="Medigue C."/>
            <person name="Rocha E.P.C."/>
            <person name="Denamur E."/>
        </authorList>
    </citation>
    <scope>NUCLEOTIDE SEQUENCE [LARGE SCALE GENOMIC DNA]</scope>
    <source>
        <strain>55989 / EAEC</strain>
    </source>
</reference>
<proteinExistence type="inferred from homology"/>
<gene>
    <name evidence="1" type="primary">rplE</name>
    <name type="ordered locus">EC55989_3724</name>
</gene>
<dbReference type="EMBL" id="CU928145">
    <property type="protein sequence ID" value="CAV00017.1"/>
    <property type="molecule type" value="Genomic_DNA"/>
</dbReference>
<dbReference type="RefSeq" id="WP_001096200.1">
    <property type="nucleotide sequence ID" value="NZ_CP028304.1"/>
</dbReference>
<dbReference type="SMR" id="B7L4J7"/>
<dbReference type="GeneID" id="93778679"/>
<dbReference type="KEGG" id="eck:EC55989_3724"/>
<dbReference type="HOGENOM" id="CLU_061015_2_1_6"/>
<dbReference type="Proteomes" id="UP000000746">
    <property type="component" value="Chromosome"/>
</dbReference>
<dbReference type="GO" id="GO:1990904">
    <property type="term" value="C:ribonucleoprotein complex"/>
    <property type="evidence" value="ECO:0007669"/>
    <property type="project" value="UniProtKB-KW"/>
</dbReference>
<dbReference type="GO" id="GO:0005840">
    <property type="term" value="C:ribosome"/>
    <property type="evidence" value="ECO:0007669"/>
    <property type="project" value="UniProtKB-KW"/>
</dbReference>
<dbReference type="GO" id="GO:0019843">
    <property type="term" value="F:rRNA binding"/>
    <property type="evidence" value="ECO:0007669"/>
    <property type="project" value="UniProtKB-UniRule"/>
</dbReference>
<dbReference type="GO" id="GO:0003735">
    <property type="term" value="F:structural constituent of ribosome"/>
    <property type="evidence" value="ECO:0007669"/>
    <property type="project" value="InterPro"/>
</dbReference>
<dbReference type="GO" id="GO:0000049">
    <property type="term" value="F:tRNA binding"/>
    <property type="evidence" value="ECO:0007669"/>
    <property type="project" value="UniProtKB-UniRule"/>
</dbReference>
<dbReference type="GO" id="GO:0006412">
    <property type="term" value="P:translation"/>
    <property type="evidence" value="ECO:0007669"/>
    <property type="project" value="UniProtKB-UniRule"/>
</dbReference>
<dbReference type="FunFam" id="3.30.1440.10:FF:000001">
    <property type="entry name" value="50S ribosomal protein L5"/>
    <property type="match status" value="1"/>
</dbReference>
<dbReference type="Gene3D" id="3.30.1440.10">
    <property type="match status" value="1"/>
</dbReference>
<dbReference type="HAMAP" id="MF_01333_B">
    <property type="entry name" value="Ribosomal_uL5_B"/>
    <property type="match status" value="1"/>
</dbReference>
<dbReference type="InterPro" id="IPR002132">
    <property type="entry name" value="Ribosomal_uL5"/>
</dbReference>
<dbReference type="InterPro" id="IPR020930">
    <property type="entry name" value="Ribosomal_uL5_bac-type"/>
</dbReference>
<dbReference type="InterPro" id="IPR031309">
    <property type="entry name" value="Ribosomal_uL5_C"/>
</dbReference>
<dbReference type="InterPro" id="IPR020929">
    <property type="entry name" value="Ribosomal_uL5_CS"/>
</dbReference>
<dbReference type="InterPro" id="IPR022803">
    <property type="entry name" value="Ribosomal_uL5_dom_sf"/>
</dbReference>
<dbReference type="InterPro" id="IPR031310">
    <property type="entry name" value="Ribosomal_uL5_N"/>
</dbReference>
<dbReference type="NCBIfam" id="NF000585">
    <property type="entry name" value="PRK00010.1"/>
    <property type="match status" value="1"/>
</dbReference>
<dbReference type="PANTHER" id="PTHR11994">
    <property type="entry name" value="60S RIBOSOMAL PROTEIN L11-RELATED"/>
    <property type="match status" value="1"/>
</dbReference>
<dbReference type="Pfam" id="PF00281">
    <property type="entry name" value="Ribosomal_L5"/>
    <property type="match status" value="1"/>
</dbReference>
<dbReference type="Pfam" id="PF00673">
    <property type="entry name" value="Ribosomal_L5_C"/>
    <property type="match status" value="1"/>
</dbReference>
<dbReference type="PIRSF" id="PIRSF002161">
    <property type="entry name" value="Ribosomal_L5"/>
    <property type="match status" value="1"/>
</dbReference>
<dbReference type="SUPFAM" id="SSF55282">
    <property type="entry name" value="RL5-like"/>
    <property type="match status" value="1"/>
</dbReference>
<dbReference type="PROSITE" id="PS00358">
    <property type="entry name" value="RIBOSOMAL_L5"/>
    <property type="match status" value="1"/>
</dbReference>
<feature type="chain" id="PRO_1000166132" description="Large ribosomal subunit protein uL5">
    <location>
        <begin position="1"/>
        <end position="179"/>
    </location>
</feature>
<feature type="modified residue" description="N6-acetyllysine" evidence="1">
    <location>
        <position position="3"/>
    </location>
</feature>
<name>RL5_ECO55</name>
<evidence type="ECO:0000255" key="1">
    <source>
        <dbReference type="HAMAP-Rule" id="MF_01333"/>
    </source>
</evidence>
<evidence type="ECO:0000305" key="2"/>